<organism>
    <name type="scientific">Nitrosomonas europaea (strain ATCC 19718 / CIP 103999 / KCTC 2705 / NBRC 14298)</name>
    <dbReference type="NCBI Taxonomy" id="228410"/>
    <lineage>
        <taxon>Bacteria</taxon>
        <taxon>Pseudomonadati</taxon>
        <taxon>Pseudomonadota</taxon>
        <taxon>Betaproteobacteria</taxon>
        <taxon>Nitrosomonadales</taxon>
        <taxon>Nitrosomonadaceae</taxon>
        <taxon>Nitrosomonas</taxon>
    </lineage>
</organism>
<sequence>MNYTGKKILVLGMGKTGISMVKWLSRLGAQLSVADTRTSPPNLELISRIVPGEAIFCGPLKEELFQGIDAIAISPGVAVAEPLVQAALQQGVPVIGDIELFAVALDQYAPPGTKILAITGSNGKTTVTSMVGEMVKNAGWDVEVAGNIGPAALDALMQRMDANKWPHLWALELSSFQLETTSSLRPDAATVLNLSEDHLDRYDSIEEYAAAKARIFSRPHNNGCVQILNRDDARVYAMADKNSKQVTFGLSAPVSDEEFGLLPGGSDVWLAQGSTHLLKTSELAVAGLHNAANALAALALCRAVDLPFEPLLHALRTFRGLPHRMQKVAEFNGVTFYDDSKSTNIGSAVAALNGFRKNVILIAGGDGKGQDFSPLEQPVSKHVRSVVLLGRDADKVAQAIQASNVPIHRVTTMDEAVQVSFLLAEHGDVVLLSPACASLDMFNNYIHRAEVFTAAVRLIERKFVLTAQTCH</sequence>
<accession>Q82VS5</accession>
<comment type="function">
    <text evidence="1">Cell wall formation. Catalyzes the addition of glutamate to the nucleotide precursor UDP-N-acetylmuramoyl-L-alanine (UMA).</text>
</comment>
<comment type="catalytic activity">
    <reaction evidence="1">
        <text>UDP-N-acetyl-alpha-D-muramoyl-L-alanine + D-glutamate + ATP = UDP-N-acetyl-alpha-D-muramoyl-L-alanyl-D-glutamate + ADP + phosphate + H(+)</text>
        <dbReference type="Rhea" id="RHEA:16429"/>
        <dbReference type="ChEBI" id="CHEBI:15378"/>
        <dbReference type="ChEBI" id="CHEBI:29986"/>
        <dbReference type="ChEBI" id="CHEBI:30616"/>
        <dbReference type="ChEBI" id="CHEBI:43474"/>
        <dbReference type="ChEBI" id="CHEBI:83898"/>
        <dbReference type="ChEBI" id="CHEBI:83900"/>
        <dbReference type="ChEBI" id="CHEBI:456216"/>
        <dbReference type="EC" id="6.3.2.9"/>
    </reaction>
</comment>
<comment type="pathway">
    <text evidence="1">Cell wall biogenesis; peptidoglycan biosynthesis.</text>
</comment>
<comment type="subcellular location">
    <subcellularLocation>
        <location evidence="1">Cytoplasm</location>
    </subcellularLocation>
</comment>
<comment type="similarity">
    <text evidence="1">Belongs to the MurCDEF family.</text>
</comment>
<gene>
    <name evidence="1" type="primary">murD</name>
    <name type="ordered locus">NE0989</name>
</gene>
<name>MURD_NITEU</name>
<feature type="chain" id="PRO_0000109050" description="UDP-N-acetylmuramoylalanine--D-glutamate ligase">
    <location>
        <begin position="1"/>
        <end position="471"/>
    </location>
</feature>
<feature type="binding site" evidence="1">
    <location>
        <begin position="120"/>
        <end position="126"/>
    </location>
    <ligand>
        <name>ATP</name>
        <dbReference type="ChEBI" id="CHEBI:30616"/>
    </ligand>
</feature>
<proteinExistence type="inferred from homology"/>
<dbReference type="EC" id="6.3.2.9" evidence="1"/>
<dbReference type="EMBL" id="AL954747">
    <property type="protein sequence ID" value="CAD84900.1"/>
    <property type="molecule type" value="Genomic_DNA"/>
</dbReference>
<dbReference type="RefSeq" id="WP_011111598.1">
    <property type="nucleotide sequence ID" value="NC_004757.1"/>
</dbReference>
<dbReference type="SMR" id="Q82VS5"/>
<dbReference type="STRING" id="228410.NE0989"/>
<dbReference type="GeneID" id="87104180"/>
<dbReference type="KEGG" id="neu:NE0989"/>
<dbReference type="eggNOG" id="COG0771">
    <property type="taxonomic scope" value="Bacteria"/>
</dbReference>
<dbReference type="HOGENOM" id="CLU_032540_1_0_4"/>
<dbReference type="OrthoDB" id="9809796at2"/>
<dbReference type="PhylomeDB" id="Q82VS5"/>
<dbReference type="UniPathway" id="UPA00219"/>
<dbReference type="Proteomes" id="UP000001416">
    <property type="component" value="Chromosome"/>
</dbReference>
<dbReference type="GO" id="GO:0005737">
    <property type="term" value="C:cytoplasm"/>
    <property type="evidence" value="ECO:0007669"/>
    <property type="project" value="UniProtKB-SubCell"/>
</dbReference>
<dbReference type="GO" id="GO:0005524">
    <property type="term" value="F:ATP binding"/>
    <property type="evidence" value="ECO:0007669"/>
    <property type="project" value="UniProtKB-UniRule"/>
</dbReference>
<dbReference type="GO" id="GO:0008764">
    <property type="term" value="F:UDP-N-acetylmuramoylalanine-D-glutamate ligase activity"/>
    <property type="evidence" value="ECO:0007669"/>
    <property type="project" value="UniProtKB-UniRule"/>
</dbReference>
<dbReference type="GO" id="GO:0051301">
    <property type="term" value="P:cell division"/>
    <property type="evidence" value="ECO:0007669"/>
    <property type="project" value="UniProtKB-KW"/>
</dbReference>
<dbReference type="GO" id="GO:0071555">
    <property type="term" value="P:cell wall organization"/>
    <property type="evidence" value="ECO:0007669"/>
    <property type="project" value="UniProtKB-KW"/>
</dbReference>
<dbReference type="GO" id="GO:0009252">
    <property type="term" value="P:peptidoglycan biosynthetic process"/>
    <property type="evidence" value="ECO:0007669"/>
    <property type="project" value="UniProtKB-UniRule"/>
</dbReference>
<dbReference type="GO" id="GO:0008360">
    <property type="term" value="P:regulation of cell shape"/>
    <property type="evidence" value="ECO:0007669"/>
    <property type="project" value="UniProtKB-KW"/>
</dbReference>
<dbReference type="Gene3D" id="3.90.190.20">
    <property type="entry name" value="Mur ligase, C-terminal domain"/>
    <property type="match status" value="1"/>
</dbReference>
<dbReference type="Gene3D" id="3.40.1190.10">
    <property type="entry name" value="Mur-like, catalytic domain"/>
    <property type="match status" value="1"/>
</dbReference>
<dbReference type="Gene3D" id="3.40.50.720">
    <property type="entry name" value="NAD(P)-binding Rossmann-like Domain"/>
    <property type="match status" value="1"/>
</dbReference>
<dbReference type="HAMAP" id="MF_00639">
    <property type="entry name" value="MurD"/>
    <property type="match status" value="1"/>
</dbReference>
<dbReference type="InterPro" id="IPR036565">
    <property type="entry name" value="Mur-like_cat_sf"/>
</dbReference>
<dbReference type="InterPro" id="IPR004101">
    <property type="entry name" value="Mur_ligase_C"/>
</dbReference>
<dbReference type="InterPro" id="IPR036615">
    <property type="entry name" value="Mur_ligase_C_dom_sf"/>
</dbReference>
<dbReference type="InterPro" id="IPR013221">
    <property type="entry name" value="Mur_ligase_cen"/>
</dbReference>
<dbReference type="InterPro" id="IPR005762">
    <property type="entry name" value="MurD"/>
</dbReference>
<dbReference type="NCBIfam" id="TIGR01087">
    <property type="entry name" value="murD"/>
    <property type="match status" value="1"/>
</dbReference>
<dbReference type="PANTHER" id="PTHR43692">
    <property type="entry name" value="UDP-N-ACETYLMURAMOYLALANINE--D-GLUTAMATE LIGASE"/>
    <property type="match status" value="1"/>
</dbReference>
<dbReference type="PANTHER" id="PTHR43692:SF1">
    <property type="entry name" value="UDP-N-ACETYLMURAMOYLALANINE--D-GLUTAMATE LIGASE"/>
    <property type="match status" value="1"/>
</dbReference>
<dbReference type="Pfam" id="PF02875">
    <property type="entry name" value="Mur_ligase_C"/>
    <property type="match status" value="1"/>
</dbReference>
<dbReference type="Pfam" id="PF08245">
    <property type="entry name" value="Mur_ligase_M"/>
    <property type="match status" value="1"/>
</dbReference>
<dbReference type="Pfam" id="PF21799">
    <property type="entry name" value="MurD-like_N"/>
    <property type="match status" value="1"/>
</dbReference>
<dbReference type="SUPFAM" id="SSF51984">
    <property type="entry name" value="MurCD N-terminal domain"/>
    <property type="match status" value="1"/>
</dbReference>
<dbReference type="SUPFAM" id="SSF53623">
    <property type="entry name" value="MurD-like peptide ligases, catalytic domain"/>
    <property type="match status" value="1"/>
</dbReference>
<dbReference type="SUPFAM" id="SSF53244">
    <property type="entry name" value="MurD-like peptide ligases, peptide-binding domain"/>
    <property type="match status" value="1"/>
</dbReference>
<evidence type="ECO:0000255" key="1">
    <source>
        <dbReference type="HAMAP-Rule" id="MF_00639"/>
    </source>
</evidence>
<reference key="1">
    <citation type="journal article" date="2003" name="J. Bacteriol.">
        <title>Complete genome sequence of the ammonia-oxidizing bacterium and obligate chemolithoautotroph Nitrosomonas europaea.</title>
        <authorList>
            <person name="Chain P."/>
            <person name="Lamerdin J.E."/>
            <person name="Larimer F.W."/>
            <person name="Regala W."/>
            <person name="Lao V."/>
            <person name="Land M.L."/>
            <person name="Hauser L."/>
            <person name="Hooper A.B."/>
            <person name="Klotz M.G."/>
            <person name="Norton J."/>
            <person name="Sayavedra-Soto L.A."/>
            <person name="Arciero D.M."/>
            <person name="Hommes N.G."/>
            <person name="Whittaker M.M."/>
            <person name="Arp D.J."/>
        </authorList>
    </citation>
    <scope>NUCLEOTIDE SEQUENCE [LARGE SCALE GENOMIC DNA]</scope>
    <source>
        <strain>ATCC 19718 / CIP 103999 / KCTC 2705 / NBRC 14298</strain>
    </source>
</reference>
<keyword id="KW-0067">ATP-binding</keyword>
<keyword id="KW-0131">Cell cycle</keyword>
<keyword id="KW-0132">Cell division</keyword>
<keyword id="KW-0133">Cell shape</keyword>
<keyword id="KW-0961">Cell wall biogenesis/degradation</keyword>
<keyword id="KW-0963">Cytoplasm</keyword>
<keyword id="KW-0436">Ligase</keyword>
<keyword id="KW-0547">Nucleotide-binding</keyword>
<keyword id="KW-0573">Peptidoglycan synthesis</keyword>
<keyword id="KW-1185">Reference proteome</keyword>
<protein>
    <recommendedName>
        <fullName evidence="1">UDP-N-acetylmuramoylalanine--D-glutamate ligase</fullName>
        <ecNumber evidence="1">6.3.2.9</ecNumber>
    </recommendedName>
    <alternativeName>
        <fullName evidence="1">D-glutamic acid-adding enzyme</fullName>
    </alternativeName>
    <alternativeName>
        <fullName evidence="1">UDP-N-acetylmuramoyl-L-alanyl-D-glutamate synthetase</fullName>
    </alternativeName>
</protein>